<proteinExistence type="inferred from homology"/>
<organism>
    <name type="scientific">Pseudomonas aeruginosa (strain UCBPP-PA14)</name>
    <dbReference type="NCBI Taxonomy" id="208963"/>
    <lineage>
        <taxon>Bacteria</taxon>
        <taxon>Pseudomonadati</taxon>
        <taxon>Pseudomonadota</taxon>
        <taxon>Gammaproteobacteria</taxon>
        <taxon>Pseudomonadales</taxon>
        <taxon>Pseudomonadaceae</taxon>
        <taxon>Pseudomonas</taxon>
    </lineage>
</organism>
<comment type="function">
    <text evidence="1">Specifically methylates the N7 position of guanine in position 527 of 16S rRNA.</text>
</comment>
<comment type="catalytic activity">
    <reaction evidence="1">
        <text>guanosine(527) in 16S rRNA + S-adenosyl-L-methionine = N(7)-methylguanosine(527) in 16S rRNA + S-adenosyl-L-homocysteine</text>
        <dbReference type="Rhea" id="RHEA:42732"/>
        <dbReference type="Rhea" id="RHEA-COMP:10209"/>
        <dbReference type="Rhea" id="RHEA-COMP:10210"/>
        <dbReference type="ChEBI" id="CHEBI:57856"/>
        <dbReference type="ChEBI" id="CHEBI:59789"/>
        <dbReference type="ChEBI" id="CHEBI:74269"/>
        <dbReference type="ChEBI" id="CHEBI:74480"/>
        <dbReference type="EC" id="2.1.1.170"/>
    </reaction>
</comment>
<comment type="subcellular location">
    <subcellularLocation>
        <location evidence="1">Cytoplasm</location>
    </subcellularLocation>
</comment>
<comment type="similarity">
    <text evidence="1">Belongs to the methyltransferase superfamily. RNA methyltransferase RsmG family.</text>
</comment>
<name>RSMG_PSEAB</name>
<gene>
    <name evidence="1" type="primary">rsmG</name>
    <name type="ordered locus">PA14_73360</name>
</gene>
<evidence type="ECO:0000255" key="1">
    <source>
        <dbReference type="HAMAP-Rule" id="MF_00074"/>
    </source>
</evidence>
<feature type="chain" id="PRO_1000010185" description="Ribosomal RNA small subunit methyltransferase G">
    <location>
        <begin position="1"/>
        <end position="214"/>
    </location>
</feature>
<feature type="binding site" evidence="1">
    <location>
        <position position="81"/>
    </location>
    <ligand>
        <name>S-adenosyl-L-methionine</name>
        <dbReference type="ChEBI" id="CHEBI:59789"/>
    </ligand>
</feature>
<feature type="binding site" evidence="1">
    <location>
        <position position="86"/>
    </location>
    <ligand>
        <name>S-adenosyl-L-methionine</name>
        <dbReference type="ChEBI" id="CHEBI:59789"/>
    </ligand>
</feature>
<feature type="binding site" evidence="1">
    <location>
        <begin position="132"/>
        <end position="133"/>
    </location>
    <ligand>
        <name>S-adenosyl-L-methionine</name>
        <dbReference type="ChEBI" id="CHEBI:59789"/>
    </ligand>
</feature>
<feature type="binding site" evidence="1">
    <location>
        <position position="147"/>
    </location>
    <ligand>
        <name>S-adenosyl-L-methionine</name>
        <dbReference type="ChEBI" id="CHEBI:59789"/>
    </ligand>
</feature>
<reference key="1">
    <citation type="journal article" date="2006" name="Genome Biol.">
        <title>Genomic analysis reveals that Pseudomonas aeruginosa virulence is combinatorial.</title>
        <authorList>
            <person name="Lee D.G."/>
            <person name="Urbach J.M."/>
            <person name="Wu G."/>
            <person name="Liberati N.T."/>
            <person name="Feinbaum R.L."/>
            <person name="Miyata S."/>
            <person name="Diggins L.T."/>
            <person name="He J."/>
            <person name="Saucier M."/>
            <person name="Deziel E."/>
            <person name="Friedman L."/>
            <person name="Li L."/>
            <person name="Grills G."/>
            <person name="Montgomery K."/>
            <person name="Kucherlapati R."/>
            <person name="Rahme L.G."/>
            <person name="Ausubel F.M."/>
        </authorList>
    </citation>
    <scope>NUCLEOTIDE SEQUENCE [LARGE SCALE GENOMIC DNA]</scope>
    <source>
        <strain>UCBPP-PA14</strain>
    </source>
</reference>
<accession>Q02DE4</accession>
<keyword id="KW-0963">Cytoplasm</keyword>
<keyword id="KW-0489">Methyltransferase</keyword>
<keyword id="KW-0698">rRNA processing</keyword>
<keyword id="KW-0949">S-adenosyl-L-methionine</keyword>
<keyword id="KW-0808">Transferase</keyword>
<sequence length="214" mass="23682">MSAVTQHHADELARGADELGVALDADKQRQLLAYLALLIKWNKAYNLTAVRDPDEMVSRHLLDSLSIVPYAEAGDNWLDVGSGGGMPGVPLAILFPEKRLTLLDSNGKKTRFLTQVKLELKLANLEVVHSRVEAFRPESPFDGIVSRAFSSLEDFANWTRHLGGQETRWLAMKGVHPNEELAALPEDFRVEAEHALAVPGCQGQRHLLILRCTA</sequence>
<dbReference type="EC" id="2.1.1.170" evidence="1"/>
<dbReference type="EMBL" id="CP000438">
    <property type="protein sequence ID" value="ABJ14951.1"/>
    <property type="molecule type" value="Genomic_DNA"/>
</dbReference>
<dbReference type="RefSeq" id="WP_003142190.1">
    <property type="nucleotide sequence ID" value="NZ_CP034244.1"/>
</dbReference>
<dbReference type="SMR" id="Q02DE4"/>
<dbReference type="KEGG" id="pau:PA14_73360"/>
<dbReference type="PseudoCAP" id="PA14_73360"/>
<dbReference type="HOGENOM" id="CLU_065341_2_0_6"/>
<dbReference type="BioCyc" id="PAER208963:G1G74-6171-MONOMER"/>
<dbReference type="Proteomes" id="UP000000653">
    <property type="component" value="Chromosome"/>
</dbReference>
<dbReference type="GO" id="GO:0005829">
    <property type="term" value="C:cytosol"/>
    <property type="evidence" value="ECO:0007669"/>
    <property type="project" value="TreeGrafter"/>
</dbReference>
<dbReference type="GO" id="GO:0070043">
    <property type="term" value="F:rRNA (guanine-N7-)-methyltransferase activity"/>
    <property type="evidence" value="ECO:0007669"/>
    <property type="project" value="UniProtKB-UniRule"/>
</dbReference>
<dbReference type="FunFam" id="3.40.50.150:FF:000032">
    <property type="entry name" value="Ribosomal RNA small subunit methyltransferase G"/>
    <property type="match status" value="1"/>
</dbReference>
<dbReference type="Gene3D" id="3.40.50.150">
    <property type="entry name" value="Vaccinia Virus protein VP39"/>
    <property type="match status" value="1"/>
</dbReference>
<dbReference type="HAMAP" id="MF_00074">
    <property type="entry name" value="16SrRNA_methyltr_G"/>
    <property type="match status" value="1"/>
</dbReference>
<dbReference type="InterPro" id="IPR003682">
    <property type="entry name" value="rRNA_ssu_MeTfrase_G"/>
</dbReference>
<dbReference type="InterPro" id="IPR029063">
    <property type="entry name" value="SAM-dependent_MTases_sf"/>
</dbReference>
<dbReference type="NCBIfam" id="TIGR00138">
    <property type="entry name" value="rsmG_gidB"/>
    <property type="match status" value="1"/>
</dbReference>
<dbReference type="PANTHER" id="PTHR31760">
    <property type="entry name" value="S-ADENOSYL-L-METHIONINE-DEPENDENT METHYLTRANSFERASES SUPERFAMILY PROTEIN"/>
    <property type="match status" value="1"/>
</dbReference>
<dbReference type="PANTHER" id="PTHR31760:SF0">
    <property type="entry name" value="S-ADENOSYL-L-METHIONINE-DEPENDENT METHYLTRANSFERASES SUPERFAMILY PROTEIN"/>
    <property type="match status" value="1"/>
</dbReference>
<dbReference type="Pfam" id="PF02527">
    <property type="entry name" value="GidB"/>
    <property type="match status" value="1"/>
</dbReference>
<dbReference type="PIRSF" id="PIRSF003078">
    <property type="entry name" value="GidB"/>
    <property type="match status" value="1"/>
</dbReference>
<dbReference type="SUPFAM" id="SSF53335">
    <property type="entry name" value="S-adenosyl-L-methionine-dependent methyltransferases"/>
    <property type="match status" value="1"/>
</dbReference>
<protein>
    <recommendedName>
        <fullName evidence="1">Ribosomal RNA small subunit methyltransferase G</fullName>
        <ecNumber evidence="1">2.1.1.170</ecNumber>
    </recommendedName>
    <alternativeName>
        <fullName evidence="1">16S rRNA 7-methylguanosine methyltransferase</fullName>
        <shortName evidence="1">16S rRNA m7G methyltransferase</shortName>
    </alternativeName>
</protein>